<sequence length="327" mass="36117">MKKWQFVGTTALGATLLLGACGGGNGGSGNSDLKGEAKGDGSSTVAPIVEKLNEKWAQDHSDAKISAGQAGTGAGFQKFIAGDIDFADASRPIKDEEKQKLQDKNIKYKEFKIAQDGVTVAVNKENDFVDELDKQQLKAIYSGKAKTWKDVNSKWPDKKINAVSPNSSHGTYDFFENEVMNKEDIKAEKNADTNAIVSSVTKNKEGIGYFGYNFYVQNKDKLKEVKIKDENGKATEPTKKTIQDNSYALSRPLFIYVNEKALKDNKVMSEFIKFVLEDKGKAAEEAGYVAAPEKTYKSQLDDLKAFIDKNQKSDDKKSDDKKSEDKK</sequence>
<reference key="1">
    <citation type="journal article" date="2004" name="Proc. Natl. Acad. Sci. U.S.A.">
        <title>Complete genomes of two clinical Staphylococcus aureus strains: evidence for the rapid evolution of virulence and drug resistance.</title>
        <authorList>
            <person name="Holden M.T.G."/>
            <person name="Feil E.J."/>
            <person name="Lindsay J.A."/>
            <person name="Peacock S.J."/>
            <person name="Day N.P.J."/>
            <person name="Enright M.C."/>
            <person name="Foster T.J."/>
            <person name="Moore C.E."/>
            <person name="Hurst L."/>
            <person name="Atkin R."/>
            <person name="Barron A."/>
            <person name="Bason N."/>
            <person name="Bentley S.D."/>
            <person name="Chillingworth C."/>
            <person name="Chillingworth T."/>
            <person name="Churcher C."/>
            <person name="Clark L."/>
            <person name="Corton C."/>
            <person name="Cronin A."/>
            <person name="Doggett J."/>
            <person name="Dowd L."/>
            <person name="Feltwell T."/>
            <person name="Hance Z."/>
            <person name="Harris B."/>
            <person name="Hauser H."/>
            <person name="Holroyd S."/>
            <person name="Jagels K."/>
            <person name="James K.D."/>
            <person name="Lennard N."/>
            <person name="Line A."/>
            <person name="Mayes R."/>
            <person name="Moule S."/>
            <person name="Mungall K."/>
            <person name="Ormond D."/>
            <person name="Quail M.A."/>
            <person name="Rabbinowitsch E."/>
            <person name="Rutherford K.M."/>
            <person name="Sanders M."/>
            <person name="Sharp S."/>
            <person name="Simmonds M."/>
            <person name="Stevens K."/>
            <person name="Whitehead S."/>
            <person name="Barrell B.G."/>
            <person name="Spratt B.G."/>
            <person name="Parkhill J."/>
        </authorList>
    </citation>
    <scope>NUCLEOTIDE SEQUENCE [LARGE SCALE GENOMIC DNA]</scope>
    <source>
        <strain>MSSA476</strain>
    </source>
</reference>
<keyword id="KW-1003">Cell membrane</keyword>
<keyword id="KW-0449">Lipoprotein</keyword>
<keyword id="KW-0472">Membrane</keyword>
<keyword id="KW-0564">Palmitate</keyword>
<keyword id="KW-0592">Phosphate transport</keyword>
<keyword id="KW-0732">Signal</keyword>
<keyword id="KW-0813">Transport</keyword>
<dbReference type="EMBL" id="BX571857">
    <property type="protein sequence ID" value="CAG43106.1"/>
    <property type="molecule type" value="Genomic_DNA"/>
</dbReference>
<dbReference type="RefSeq" id="WP_000759232.1">
    <property type="nucleotide sequence ID" value="NC_002953.3"/>
</dbReference>
<dbReference type="SMR" id="Q6G9H1"/>
<dbReference type="KEGG" id="sas:SAS1330"/>
<dbReference type="HOGENOM" id="CLU_026228_1_1_9"/>
<dbReference type="GO" id="GO:0005886">
    <property type="term" value="C:plasma membrane"/>
    <property type="evidence" value="ECO:0007669"/>
    <property type="project" value="UniProtKB-SubCell"/>
</dbReference>
<dbReference type="GO" id="GO:0042301">
    <property type="term" value="F:phosphate ion binding"/>
    <property type="evidence" value="ECO:0007669"/>
    <property type="project" value="InterPro"/>
</dbReference>
<dbReference type="GO" id="GO:0006817">
    <property type="term" value="P:phosphate ion transport"/>
    <property type="evidence" value="ECO:0007669"/>
    <property type="project" value="UniProtKB-KW"/>
</dbReference>
<dbReference type="CDD" id="cd13654">
    <property type="entry name" value="PBP2_phosphate_like_2"/>
    <property type="match status" value="1"/>
</dbReference>
<dbReference type="Gene3D" id="3.40.190.10">
    <property type="entry name" value="Periplasmic binding protein-like II"/>
    <property type="match status" value="2"/>
</dbReference>
<dbReference type="InterPro" id="IPR024370">
    <property type="entry name" value="PBP_domain"/>
</dbReference>
<dbReference type="InterPro" id="IPR011862">
    <property type="entry name" value="Phos-bd"/>
</dbReference>
<dbReference type="InterPro" id="IPR050811">
    <property type="entry name" value="Phosphate_ABC_transporter"/>
</dbReference>
<dbReference type="NCBIfam" id="TIGR02136">
    <property type="entry name" value="ptsS_2"/>
    <property type="match status" value="1"/>
</dbReference>
<dbReference type="PANTHER" id="PTHR30570">
    <property type="entry name" value="PERIPLASMIC PHOSPHATE BINDING COMPONENT OF PHOSPHATE ABC TRANSPORTER"/>
    <property type="match status" value="1"/>
</dbReference>
<dbReference type="PANTHER" id="PTHR30570:SF1">
    <property type="entry name" value="PHOSPHATE-BINDING PROTEIN PSTS"/>
    <property type="match status" value="1"/>
</dbReference>
<dbReference type="Pfam" id="PF12849">
    <property type="entry name" value="PBP_like_2"/>
    <property type="match status" value="1"/>
</dbReference>
<dbReference type="SUPFAM" id="SSF53850">
    <property type="entry name" value="Periplasmic binding protein-like II"/>
    <property type="match status" value="1"/>
</dbReference>
<dbReference type="PROSITE" id="PS51257">
    <property type="entry name" value="PROKAR_LIPOPROTEIN"/>
    <property type="match status" value="1"/>
</dbReference>
<gene>
    <name type="primary">pstS</name>
    <name type="ordered locus">SAS1330</name>
</gene>
<comment type="function">
    <text evidence="1">Part of the ABC transporter complex PstSACB involved in phosphate import.</text>
</comment>
<comment type="subunit">
    <text evidence="4">The complex is composed of two ATP-binding proteins (PstB), two transmembrane proteins (PstC and PstA) and a solute-binding protein (PstS).</text>
</comment>
<comment type="subcellular location">
    <subcellularLocation>
        <location evidence="4">Cell membrane</location>
        <topology evidence="4">Lipid-anchor</topology>
    </subcellularLocation>
</comment>
<comment type="similarity">
    <text evidence="4">Belongs to the PstS family.</text>
</comment>
<name>PSTS_STAAS</name>
<evidence type="ECO:0000250" key="1"/>
<evidence type="ECO:0000255" key="2">
    <source>
        <dbReference type="PROSITE-ProRule" id="PRU00303"/>
    </source>
</evidence>
<evidence type="ECO:0000256" key="3">
    <source>
        <dbReference type="SAM" id="MobiDB-lite"/>
    </source>
</evidence>
<evidence type="ECO:0000305" key="4"/>
<protein>
    <recommendedName>
        <fullName>Phosphate-binding protein PstS</fullName>
        <shortName>PBP</shortName>
    </recommendedName>
</protein>
<feature type="signal peptide" evidence="2">
    <location>
        <begin position="1"/>
        <end position="20"/>
    </location>
</feature>
<feature type="chain" id="PRO_0000281660" description="Phosphate-binding protein PstS">
    <location>
        <begin position="21"/>
        <end position="327"/>
    </location>
</feature>
<feature type="region of interest" description="Disordered" evidence="3">
    <location>
        <begin position="307"/>
        <end position="327"/>
    </location>
</feature>
<feature type="lipid moiety-binding region" description="N-palmitoyl cysteine" evidence="2">
    <location>
        <position position="21"/>
    </location>
</feature>
<feature type="lipid moiety-binding region" description="S-diacylglycerol cysteine" evidence="2">
    <location>
        <position position="21"/>
    </location>
</feature>
<organism>
    <name type="scientific">Staphylococcus aureus (strain MSSA476)</name>
    <dbReference type="NCBI Taxonomy" id="282459"/>
    <lineage>
        <taxon>Bacteria</taxon>
        <taxon>Bacillati</taxon>
        <taxon>Bacillota</taxon>
        <taxon>Bacilli</taxon>
        <taxon>Bacillales</taxon>
        <taxon>Staphylococcaceae</taxon>
        <taxon>Staphylococcus</taxon>
    </lineage>
</organism>
<proteinExistence type="inferred from homology"/>
<accession>Q6G9H1</accession>